<sequence>MSDVARILKEARDQGRLTALDFAKEIFDDFIELHGDRNFRDDGAVIGGIGRLNGQAVTVVGIQKGKNLQDNLNRNFGQPHPEGYRKALRLMKQAEKFGRSVVTFINTAGAYPGVGAEERGQGEAIARNLMEMSDLKVPIIAIIIGEGGSGGALALAVADKVWMLENTIYSILSPEGFATILWKDGSRSEEAAELMKITSGELLNMGIVDKVIPERGYFTSEIIEAIKTAIVDELAELSQLSTEDLLEARYQRFRKY</sequence>
<keyword id="KW-0067">ATP-binding</keyword>
<keyword id="KW-0963">Cytoplasm</keyword>
<keyword id="KW-0275">Fatty acid biosynthesis</keyword>
<keyword id="KW-0276">Fatty acid metabolism</keyword>
<keyword id="KW-0444">Lipid biosynthesis</keyword>
<keyword id="KW-0443">Lipid metabolism</keyword>
<keyword id="KW-0547">Nucleotide-binding</keyword>
<keyword id="KW-1185">Reference proteome</keyword>
<keyword id="KW-0808">Transferase</keyword>
<dbReference type="EC" id="2.1.3.15" evidence="1"/>
<dbReference type="EMBL" id="CP000023">
    <property type="protein sequence ID" value="AAV60111.1"/>
    <property type="molecule type" value="Genomic_DNA"/>
</dbReference>
<dbReference type="RefSeq" id="WP_011225532.1">
    <property type="nucleotide sequence ID" value="NC_006448.1"/>
</dbReference>
<dbReference type="SMR" id="Q5M5R1"/>
<dbReference type="STRING" id="264199.stu0393"/>
<dbReference type="GeneID" id="66898317"/>
<dbReference type="KEGG" id="stl:stu0393"/>
<dbReference type="PATRIC" id="fig|264199.4.peg.399"/>
<dbReference type="eggNOG" id="COG0825">
    <property type="taxonomic scope" value="Bacteria"/>
</dbReference>
<dbReference type="HOGENOM" id="CLU_015486_0_2_9"/>
<dbReference type="UniPathway" id="UPA00655">
    <property type="reaction ID" value="UER00711"/>
</dbReference>
<dbReference type="Proteomes" id="UP000001170">
    <property type="component" value="Chromosome"/>
</dbReference>
<dbReference type="GO" id="GO:0009317">
    <property type="term" value="C:acetyl-CoA carboxylase complex"/>
    <property type="evidence" value="ECO:0007669"/>
    <property type="project" value="InterPro"/>
</dbReference>
<dbReference type="GO" id="GO:0003989">
    <property type="term" value="F:acetyl-CoA carboxylase activity"/>
    <property type="evidence" value="ECO:0007669"/>
    <property type="project" value="InterPro"/>
</dbReference>
<dbReference type="GO" id="GO:0005524">
    <property type="term" value="F:ATP binding"/>
    <property type="evidence" value="ECO:0007669"/>
    <property type="project" value="UniProtKB-KW"/>
</dbReference>
<dbReference type="GO" id="GO:0016743">
    <property type="term" value="F:carboxyl- or carbamoyltransferase activity"/>
    <property type="evidence" value="ECO:0007669"/>
    <property type="project" value="UniProtKB-UniRule"/>
</dbReference>
<dbReference type="GO" id="GO:0006633">
    <property type="term" value="P:fatty acid biosynthetic process"/>
    <property type="evidence" value="ECO:0007669"/>
    <property type="project" value="UniProtKB-KW"/>
</dbReference>
<dbReference type="GO" id="GO:2001295">
    <property type="term" value="P:malonyl-CoA biosynthetic process"/>
    <property type="evidence" value="ECO:0007669"/>
    <property type="project" value="UniProtKB-UniRule"/>
</dbReference>
<dbReference type="Gene3D" id="3.90.226.10">
    <property type="entry name" value="2-enoyl-CoA Hydratase, Chain A, domain 1"/>
    <property type="match status" value="1"/>
</dbReference>
<dbReference type="HAMAP" id="MF_00823">
    <property type="entry name" value="AcetylCoA_CT_alpha"/>
    <property type="match status" value="1"/>
</dbReference>
<dbReference type="InterPro" id="IPR001095">
    <property type="entry name" value="Acetyl_CoA_COase_a_su"/>
</dbReference>
<dbReference type="InterPro" id="IPR029045">
    <property type="entry name" value="ClpP/crotonase-like_dom_sf"/>
</dbReference>
<dbReference type="InterPro" id="IPR011763">
    <property type="entry name" value="COA_CT_C"/>
</dbReference>
<dbReference type="NCBIfam" id="TIGR00513">
    <property type="entry name" value="accA"/>
    <property type="match status" value="1"/>
</dbReference>
<dbReference type="NCBIfam" id="NF041504">
    <property type="entry name" value="AccA_sub"/>
    <property type="match status" value="1"/>
</dbReference>
<dbReference type="NCBIfam" id="NF004344">
    <property type="entry name" value="PRK05724.1"/>
    <property type="match status" value="1"/>
</dbReference>
<dbReference type="NCBIfam" id="NF008971">
    <property type="entry name" value="PRK12319.1"/>
    <property type="match status" value="1"/>
</dbReference>
<dbReference type="PANTHER" id="PTHR42853">
    <property type="entry name" value="ACETYL-COENZYME A CARBOXYLASE CARBOXYL TRANSFERASE SUBUNIT ALPHA"/>
    <property type="match status" value="1"/>
</dbReference>
<dbReference type="PANTHER" id="PTHR42853:SF3">
    <property type="entry name" value="ACETYL-COENZYME A CARBOXYLASE CARBOXYL TRANSFERASE SUBUNIT ALPHA, CHLOROPLASTIC"/>
    <property type="match status" value="1"/>
</dbReference>
<dbReference type="Pfam" id="PF03255">
    <property type="entry name" value="ACCA"/>
    <property type="match status" value="1"/>
</dbReference>
<dbReference type="PRINTS" id="PR01069">
    <property type="entry name" value="ACCCTRFRASEA"/>
</dbReference>
<dbReference type="SUPFAM" id="SSF52096">
    <property type="entry name" value="ClpP/crotonase"/>
    <property type="match status" value="1"/>
</dbReference>
<dbReference type="PROSITE" id="PS50989">
    <property type="entry name" value="COA_CT_CTER"/>
    <property type="match status" value="1"/>
</dbReference>
<feature type="chain" id="PRO_0000223838" description="Acetyl-coenzyme A carboxylase carboxyl transferase subunit alpha">
    <location>
        <begin position="1"/>
        <end position="256"/>
    </location>
</feature>
<feature type="domain" description="CoA carboxyltransferase C-terminal" evidence="2">
    <location>
        <begin position="1"/>
        <end position="236"/>
    </location>
</feature>
<gene>
    <name evidence="1" type="primary">accA</name>
    <name type="ordered locus">stu0393</name>
</gene>
<proteinExistence type="inferred from homology"/>
<comment type="function">
    <text evidence="1">Component of the acetyl coenzyme A carboxylase (ACC) complex. First, biotin carboxylase catalyzes the carboxylation of biotin on its carrier protein (BCCP) and then the CO(2) group is transferred by the carboxyltransferase to acetyl-CoA to form malonyl-CoA.</text>
</comment>
<comment type="catalytic activity">
    <reaction evidence="1">
        <text>N(6)-carboxybiotinyl-L-lysyl-[protein] + acetyl-CoA = N(6)-biotinyl-L-lysyl-[protein] + malonyl-CoA</text>
        <dbReference type="Rhea" id="RHEA:54728"/>
        <dbReference type="Rhea" id="RHEA-COMP:10505"/>
        <dbReference type="Rhea" id="RHEA-COMP:10506"/>
        <dbReference type="ChEBI" id="CHEBI:57288"/>
        <dbReference type="ChEBI" id="CHEBI:57384"/>
        <dbReference type="ChEBI" id="CHEBI:83144"/>
        <dbReference type="ChEBI" id="CHEBI:83145"/>
        <dbReference type="EC" id="2.1.3.15"/>
    </reaction>
</comment>
<comment type="pathway">
    <text evidence="1">Lipid metabolism; malonyl-CoA biosynthesis; malonyl-CoA from acetyl-CoA: step 1/1.</text>
</comment>
<comment type="subunit">
    <text evidence="1">Acetyl-CoA carboxylase is a heterohexamer composed of biotin carboxyl carrier protein (AccB), biotin carboxylase (AccC) and two subunits each of ACCase subunit alpha (AccA) and ACCase subunit beta (AccD).</text>
</comment>
<comment type="subcellular location">
    <subcellularLocation>
        <location evidence="1">Cytoplasm</location>
    </subcellularLocation>
</comment>
<comment type="similarity">
    <text evidence="1">Belongs to the AccA family.</text>
</comment>
<protein>
    <recommendedName>
        <fullName evidence="1">Acetyl-coenzyme A carboxylase carboxyl transferase subunit alpha</fullName>
        <shortName evidence="1">ACCase subunit alpha</shortName>
        <shortName evidence="1">Acetyl-CoA carboxylase carboxyltransferase subunit alpha</shortName>
        <ecNumber evidence="1">2.1.3.15</ecNumber>
    </recommendedName>
</protein>
<accession>Q5M5R1</accession>
<name>ACCA_STRT2</name>
<evidence type="ECO:0000255" key="1">
    <source>
        <dbReference type="HAMAP-Rule" id="MF_00823"/>
    </source>
</evidence>
<evidence type="ECO:0000255" key="2">
    <source>
        <dbReference type="PROSITE-ProRule" id="PRU01137"/>
    </source>
</evidence>
<reference key="1">
    <citation type="journal article" date="2004" name="Nat. Biotechnol.">
        <title>Complete sequence and comparative genome analysis of the dairy bacterium Streptococcus thermophilus.</title>
        <authorList>
            <person name="Bolotin A."/>
            <person name="Quinquis B."/>
            <person name="Renault P."/>
            <person name="Sorokin A."/>
            <person name="Ehrlich S.D."/>
            <person name="Kulakauskas S."/>
            <person name="Lapidus A."/>
            <person name="Goltsman E."/>
            <person name="Mazur M."/>
            <person name="Pusch G.D."/>
            <person name="Fonstein M."/>
            <person name="Overbeek R."/>
            <person name="Kyprides N."/>
            <person name="Purnelle B."/>
            <person name="Prozzi D."/>
            <person name="Ngui K."/>
            <person name="Masuy D."/>
            <person name="Hancy F."/>
            <person name="Burteau S."/>
            <person name="Boutry M."/>
            <person name="Delcour J."/>
            <person name="Goffeau A."/>
            <person name="Hols P."/>
        </authorList>
    </citation>
    <scope>NUCLEOTIDE SEQUENCE [LARGE SCALE GENOMIC DNA]</scope>
    <source>
        <strain>ATCC BAA-250 / LMG 18311</strain>
    </source>
</reference>
<organism>
    <name type="scientific">Streptococcus thermophilus (strain ATCC BAA-250 / LMG 18311)</name>
    <dbReference type="NCBI Taxonomy" id="264199"/>
    <lineage>
        <taxon>Bacteria</taxon>
        <taxon>Bacillati</taxon>
        <taxon>Bacillota</taxon>
        <taxon>Bacilli</taxon>
        <taxon>Lactobacillales</taxon>
        <taxon>Streptococcaceae</taxon>
        <taxon>Streptococcus</taxon>
    </lineage>
</organism>